<sequence>MNRKTVFRNVLLVAVVLLVIYAFSYFSNDTRDFKTVDTSVAISQLDAKNVASAQIDDREQQVRLWLKNGNDATDGKTQILAKYPASASEQIFDKVEGAGADKFNTTVTQESWLTSILLFVLPMIILFGIFFFVMNRMQGGGGRGGVMGFGKSKAKQLTKDMPKTTFADVAGADEAVEELYEIKDFLQNPARYQALGAKIPRGVLLYGPPGTGKTLLARAVAGEAGVPFFTISGSDFVEMFVGVGASRVRDMFEQAKQNSPCIIFVDEIDAVGRQRGAGLGGGHDEREQTLNQLLVEMDGFGDRTGIILIAATNRPDILDPALLRPGRFDRQIPVGAPDLAGRRAILRVHSQGKPIDPNADLEGLAKRTVGMSGADLANVINEAALLTARENGTVITEASLEESVDRVVGGPRRKSRIISEHEKKITAYHEGGHTLAAWAMPDIEPVYKVTILARGRTGGHAMTVPEDDKGLMTRSEMIARLVMAMGGRAAEELVFHEPTTGASSDIDMATKIARAMVTEYGMSAKLGAVRYGQEGGDPFLGRSMGVQSDYSHEIAREIDEEVRNLIEAAHTEAWAILNEYRDALDLIATELLERETLTRKDLEKILAGVEKRPRITAFNDFGGRTPSDRPPVKTPRELAIERGETWPEPAAAPVLVKAGAPNSGVPNGGVPNNGGLPNNGNQGPSNGYAQPSYPQPSAPQQTPQPGTPDYGAPAGWSAPGWPPRENPSPTYPGQQSGGYTGGQNPTPPNQSQGQYGQPQHGQPQPDQGQYGQPHPGQQAYPEQPHPGRRYPAQPDYPVQYPDGGPFADPNRGNPSGENQWQSPTPEQPQTPPPHHSAEDDGPSTARWDGPDGSR</sequence>
<accession>C0ZPK5</accession>
<gene>
    <name evidence="1" type="primary">ftsH</name>
    <name type="ordered locus">RER_06250</name>
</gene>
<comment type="function">
    <text evidence="1">Acts as a processive, ATP-dependent zinc metallopeptidase for both cytoplasmic and membrane proteins. Plays a role in the quality control of integral membrane proteins.</text>
</comment>
<comment type="cofactor">
    <cofactor evidence="1">
        <name>Zn(2+)</name>
        <dbReference type="ChEBI" id="CHEBI:29105"/>
    </cofactor>
    <text evidence="1">Binds 1 zinc ion per subunit.</text>
</comment>
<comment type="subunit">
    <text evidence="1">Homohexamer.</text>
</comment>
<comment type="subcellular location">
    <subcellularLocation>
        <location evidence="1">Cell membrane</location>
        <topology evidence="1">Multi-pass membrane protein</topology>
        <orientation evidence="1">Cytoplasmic side</orientation>
    </subcellularLocation>
</comment>
<comment type="similarity">
    <text evidence="1">In the central section; belongs to the AAA ATPase family.</text>
</comment>
<comment type="similarity">
    <text evidence="1">In the C-terminal section; belongs to the peptidase M41 family.</text>
</comment>
<protein>
    <recommendedName>
        <fullName evidence="1">ATP-dependent zinc metalloprotease FtsH</fullName>
        <ecNumber evidence="1">3.4.24.-</ecNumber>
    </recommendedName>
</protein>
<evidence type="ECO:0000255" key="1">
    <source>
        <dbReference type="HAMAP-Rule" id="MF_01458"/>
    </source>
</evidence>
<evidence type="ECO:0000256" key="2">
    <source>
        <dbReference type="SAM" id="MobiDB-lite"/>
    </source>
</evidence>
<name>FTSH_RHOE4</name>
<reference key="1">
    <citation type="submission" date="2005-03" db="EMBL/GenBank/DDBJ databases">
        <title>Comparison of the complete genome sequences of Rhodococcus erythropolis PR4 and Rhodococcus opacus B4.</title>
        <authorList>
            <person name="Takarada H."/>
            <person name="Sekine M."/>
            <person name="Hosoyama A."/>
            <person name="Yamada R."/>
            <person name="Fujisawa T."/>
            <person name="Omata S."/>
            <person name="Shimizu A."/>
            <person name="Tsukatani N."/>
            <person name="Tanikawa S."/>
            <person name="Fujita N."/>
            <person name="Harayama S."/>
        </authorList>
    </citation>
    <scope>NUCLEOTIDE SEQUENCE [LARGE SCALE GENOMIC DNA]</scope>
    <source>
        <strain>PR4 / NBRC 100887</strain>
    </source>
</reference>
<keyword id="KW-0067">ATP-binding</keyword>
<keyword id="KW-1003">Cell membrane</keyword>
<keyword id="KW-0378">Hydrolase</keyword>
<keyword id="KW-0472">Membrane</keyword>
<keyword id="KW-0479">Metal-binding</keyword>
<keyword id="KW-0482">Metalloprotease</keyword>
<keyword id="KW-0547">Nucleotide-binding</keyword>
<keyword id="KW-0645">Protease</keyword>
<keyword id="KW-0812">Transmembrane</keyword>
<keyword id="KW-1133">Transmembrane helix</keyword>
<keyword id="KW-0862">Zinc</keyword>
<organism>
    <name type="scientific">Rhodococcus erythropolis (strain PR4 / NBRC 100887)</name>
    <dbReference type="NCBI Taxonomy" id="234621"/>
    <lineage>
        <taxon>Bacteria</taxon>
        <taxon>Bacillati</taxon>
        <taxon>Actinomycetota</taxon>
        <taxon>Actinomycetes</taxon>
        <taxon>Mycobacteriales</taxon>
        <taxon>Nocardiaceae</taxon>
        <taxon>Rhodococcus</taxon>
        <taxon>Rhodococcus erythropolis group</taxon>
    </lineage>
</organism>
<feature type="chain" id="PRO_0000400382" description="ATP-dependent zinc metalloprotease FtsH">
    <location>
        <begin position="1"/>
        <end position="854"/>
    </location>
</feature>
<feature type="topological domain" description="Cytoplasmic" evidence="1">
    <location>
        <begin position="1"/>
        <end position="5"/>
    </location>
</feature>
<feature type="transmembrane region" description="Helical" evidence="1">
    <location>
        <begin position="6"/>
        <end position="26"/>
    </location>
</feature>
<feature type="topological domain" description="Extracellular" evidence="1">
    <location>
        <begin position="27"/>
        <end position="112"/>
    </location>
</feature>
<feature type="transmembrane region" description="Helical" evidence="1">
    <location>
        <begin position="113"/>
        <end position="133"/>
    </location>
</feature>
<feature type="topological domain" description="Cytoplasmic" evidence="1">
    <location>
        <begin position="134"/>
        <end position="854"/>
    </location>
</feature>
<feature type="region of interest" description="Disordered" evidence="2">
    <location>
        <begin position="658"/>
        <end position="854"/>
    </location>
</feature>
<feature type="compositionally biased region" description="Low complexity" evidence="2">
    <location>
        <begin position="661"/>
        <end position="692"/>
    </location>
</feature>
<feature type="compositionally biased region" description="Low complexity" evidence="2">
    <location>
        <begin position="698"/>
        <end position="719"/>
    </location>
</feature>
<feature type="compositionally biased region" description="Pro residues" evidence="2">
    <location>
        <begin position="720"/>
        <end position="730"/>
    </location>
</feature>
<feature type="compositionally biased region" description="Low complexity" evidence="2">
    <location>
        <begin position="749"/>
        <end position="778"/>
    </location>
</feature>
<feature type="compositionally biased region" description="Polar residues" evidence="2">
    <location>
        <begin position="812"/>
        <end position="822"/>
    </location>
</feature>
<feature type="compositionally biased region" description="Pro residues" evidence="2">
    <location>
        <begin position="825"/>
        <end position="834"/>
    </location>
</feature>
<feature type="active site" evidence="1">
    <location>
        <position position="430"/>
    </location>
</feature>
<feature type="binding site" evidence="1">
    <location>
        <begin position="207"/>
        <end position="214"/>
    </location>
    <ligand>
        <name>ATP</name>
        <dbReference type="ChEBI" id="CHEBI:30616"/>
    </ligand>
</feature>
<feature type="binding site" evidence="1">
    <location>
        <position position="429"/>
    </location>
    <ligand>
        <name>Zn(2+)</name>
        <dbReference type="ChEBI" id="CHEBI:29105"/>
        <note>catalytic</note>
    </ligand>
</feature>
<feature type="binding site" evidence="1">
    <location>
        <position position="433"/>
    </location>
    <ligand>
        <name>Zn(2+)</name>
        <dbReference type="ChEBI" id="CHEBI:29105"/>
        <note>catalytic</note>
    </ligand>
</feature>
<feature type="binding site" evidence="1">
    <location>
        <position position="505"/>
    </location>
    <ligand>
        <name>Zn(2+)</name>
        <dbReference type="ChEBI" id="CHEBI:29105"/>
        <note>catalytic</note>
    </ligand>
</feature>
<proteinExistence type="inferred from homology"/>
<dbReference type="EC" id="3.4.24.-" evidence="1"/>
<dbReference type="EMBL" id="AP008957">
    <property type="protein sequence ID" value="BAH31333.1"/>
    <property type="molecule type" value="Genomic_DNA"/>
</dbReference>
<dbReference type="RefSeq" id="WP_020906072.1">
    <property type="nucleotide sequence ID" value="NC_012490.1"/>
</dbReference>
<dbReference type="SMR" id="C0ZPK5"/>
<dbReference type="MEROPS" id="M41.015"/>
<dbReference type="KEGG" id="rer:RER_06250"/>
<dbReference type="PATRIC" id="fig|234621.6.peg.1071"/>
<dbReference type="eggNOG" id="COG0465">
    <property type="taxonomic scope" value="Bacteria"/>
</dbReference>
<dbReference type="HOGENOM" id="CLU_000688_16_1_11"/>
<dbReference type="Proteomes" id="UP000002204">
    <property type="component" value="Chromosome"/>
</dbReference>
<dbReference type="GO" id="GO:0005886">
    <property type="term" value="C:plasma membrane"/>
    <property type="evidence" value="ECO:0007669"/>
    <property type="project" value="UniProtKB-SubCell"/>
</dbReference>
<dbReference type="GO" id="GO:0005524">
    <property type="term" value="F:ATP binding"/>
    <property type="evidence" value="ECO:0007669"/>
    <property type="project" value="UniProtKB-UniRule"/>
</dbReference>
<dbReference type="GO" id="GO:0016887">
    <property type="term" value="F:ATP hydrolysis activity"/>
    <property type="evidence" value="ECO:0007669"/>
    <property type="project" value="UniProtKB-UniRule"/>
</dbReference>
<dbReference type="GO" id="GO:0004176">
    <property type="term" value="F:ATP-dependent peptidase activity"/>
    <property type="evidence" value="ECO:0007669"/>
    <property type="project" value="InterPro"/>
</dbReference>
<dbReference type="GO" id="GO:0004222">
    <property type="term" value="F:metalloendopeptidase activity"/>
    <property type="evidence" value="ECO:0007669"/>
    <property type="project" value="InterPro"/>
</dbReference>
<dbReference type="GO" id="GO:0008270">
    <property type="term" value="F:zinc ion binding"/>
    <property type="evidence" value="ECO:0007669"/>
    <property type="project" value="UniProtKB-UniRule"/>
</dbReference>
<dbReference type="GO" id="GO:0030163">
    <property type="term" value="P:protein catabolic process"/>
    <property type="evidence" value="ECO:0007669"/>
    <property type="project" value="UniProtKB-UniRule"/>
</dbReference>
<dbReference type="GO" id="GO:0006508">
    <property type="term" value="P:proteolysis"/>
    <property type="evidence" value="ECO:0007669"/>
    <property type="project" value="UniProtKB-KW"/>
</dbReference>
<dbReference type="CDD" id="cd19501">
    <property type="entry name" value="RecA-like_FtsH"/>
    <property type="match status" value="1"/>
</dbReference>
<dbReference type="FunFam" id="1.10.8.60:FF:000001">
    <property type="entry name" value="ATP-dependent zinc metalloprotease FtsH"/>
    <property type="match status" value="1"/>
</dbReference>
<dbReference type="FunFam" id="1.20.58.760:FF:000002">
    <property type="entry name" value="ATP-dependent zinc metalloprotease FtsH"/>
    <property type="match status" value="1"/>
</dbReference>
<dbReference type="FunFam" id="3.40.50.300:FF:000001">
    <property type="entry name" value="ATP-dependent zinc metalloprotease FtsH"/>
    <property type="match status" value="1"/>
</dbReference>
<dbReference type="Gene3D" id="1.10.8.60">
    <property type="match status" value="1"/>
</dbReference>
<dbReference type="Gene3D" id="3.40.50.300">
    <property type="entry name" value="P-loop containing nucleotide triphosphate hydrolases"/>
    <property type="match status" value="1"/>
</dbReference>
<dbReference type="Gene3D" id="1.20.58.760">
    <property type="entry name" value="Peptidase M41"/>
    <property type="match status" value="1"/>
</dbReference>
<dbReference type="HAMAP" id="MF_01458">
    <property type="entry name" value="FtsH"/>
    <property type="match status" value="1"/>
</dbReference>
<dbReference type="InterPro" id="IPR003593">
    <property type="entry name" value="AAA+_ATPase"/>
</dbReference>
<dbReference type="InterPro" id="IPR041569">
    <property type="entry name" value="AAA_lid_3"/>
</dbReference>
<dbReference type="InterPro" id="IPR003959">
    <property type="entry name" value="ATPase_AAA_core"/>
</dbReference>
<dbReference type="InterPro" id="IPR003960">
    <property type="entry name" value="ATPase_AAA_CS"/>
</dbReference>
<dbReference type="InterPro" id="IPR005936">
    <property type="entry name" value="FtsH"/>
</dbReference>
<dbReference type="InterPro" id="IPR027417">
    <property type="entry name" value="P-loop_NTPase"/>
</dbReference>
<dbReference type="InterPro" id="IPR011546">
    <property type="entry name" value="Pept_M41_FtsH_extracell"/>
</dbReference>
<dbReference type="InterPro" id="IPR000642">
    <property type="entry name" value="Peptidase_M41"/>
</dbReference>
<dbReference type="InterPro" id="IPR037219">
    <property type="entry name" value="Peptidase_M41-like"/>
</dbReference>
<dbReference type="NCBIfam" id="TIGR01241">
    <property type="entry name" value="FtsH_fam"/>
    <property type="match status" value="1"/>
</dbReference>
<dbReference type="PANTHER" id="PTHR23076:SF97">
    <property type="entry name" value="ATP-DEPENDENT ZINC METALLOPROTEASE YME1L1"/>
    <property type="match status" value="1"/>
</dbReference>
<dbReference type="PANTHER" id="PTHR23076">
    <property type="entry name" value="METALLOPROTEASE M41 FTSH"/>
    <property type="match status" value="1"/>
</dbReference>
<dbReference type="Pfam" id="PF00004">
    <property type="entry name" value="AAA"/>
    <property type="match status" value="1"/>
</dbReference>
<dbReference type="Pfam" id="PF17862">
    <property type="entry name" value="AAA_lid_3"/>
    <property type="match status" value="1"/>
</dbReference>
<dbReference type="Pfam" id="PF06480">
    <property type="entry name" value="FtsH_ext"/>
    <property type="match status" value="1"/>
</dbReference>
<dbReference type="Pfam" id="PF01434">
    <property type="entry name" value="Peptidase_M41"/>
    <property type="match status" value="1"/>
</dbReference>
<dbReference type="PRINTS" id="PR00830">
    <property type="entry name" value="ENDOLAPTASE"/>
</dbReference>
<dbReference type="SMART" id="SM00382">
    <property type="entry name" value="AAA"/>
    <property type="match status" value="1"/>
</dbReference>
<dbReference type="SUPFAM" id="SSF140990">
    <property type="entry name" value="FtsH protease domain-like"/>
    <property type="match status" value="1"/>
</dbReference>
<dbReference type="SUPFAM" id="SSF52540">
    <property type="entry name" value="P-loop containing nucleoside triphosphate hydrolases"/>
    <property type="match status" value="1"/>
</dbReference>
<dbReference type="PROSITE" id="PS00674">
    <property type="entry name" value="AAA"/>
    <property type="match status" value="1"/>
</dbReference>